<comment type="function">
    <text evidence="1">Catalyzes the methylation of 5-carboxymethyl uridine to 5-methylcarboxymethyl uridine at the wobble position of the anticodon loop in tRNA via its methyltransferase domain. Catalyzes the last step in the formation of 5-methylcarboxymethyl uridine at the wobble position of the anticodon loop in target tRNA.</text>
</comment>
<comment type="catalytic activity">
    <reaction evidence="4">
        <text>5-(carboxymethyl)uridine(34) in tRNA + S-adenosyl-L-methionine = 5-(2-methoxy-2-oxoethyl)uridine(34) in tRNA + S-adenosyl-L-homocysteine</text>
        <dbReference type="Rhea" id="RHEA:43208"/>
        <dbReference type="Rhea" id="RHEA-COMP:10407"/>
        <dbReference type="Rhea" id="RHEA-COMP:10408"/>
        <dbReference type="ChEBI" id="CHEBI:57856"/>
        <dbReference type="ChEBI" id="CHEBI:59789"/>
        <dbReference type="ChEBI" id="CHEBI:74851"/>
        <dbReference type="ChEBI" id="CHEBI:74882"/>
        <dbReference type="EC" id="2.1.1.229"/>
    </reaction>
</comment>
<comment type="subunit">
    <text evidence="1">Interacts with TRM112A and TRM112B.</text>
</comment>
<comment type="sequence caution" evidence="3">
    <conflict type="erroneous gene model prediction">
        <sequence resource="EMBL-CDS" id="AAG52197"/>
    </conflict>
</comment>
<comment type="sequence caution" evidence="3">
    <conflict type="erroneous initiation">
        <sequence resource="EMBL-CDS" id="AAM64893"/>
    </conflict>
    <text>Truncated N-terminus.</text>
</comment>
<organism>
    <name type="scientific">Arabidopsis thaliana</name>
    <name type="common">Mouse-ear cress</name>
    <dbReference type="NCBI Taxonomy" id="3702"/>
    <lineage>
        <taxon>Eukaryota</taxon>
        <taxon>Viridiplantae</taxon>
        <taxon>Streptophyta</taxon>
        <taxon>Embryophyta</taxon>
        <taxon>Tracheophyta</taxon>
        <taxon>Spermatophyta</taxon>
        <taxon>Magnoliopsida</taxon>
        <taxon>eudicotyledons</taxon>
        <taxon>Gunneridae</taxon>
        <taxon>Pentapetalae</taxon>
        <taxon>rosids</taxon>
        <taxon>malvids</taxon>
        <taxon>Brassicales</taxon>
        <taxon>Brassicaceae</taxon>
        <taxon>Camelineae</taxon>
        <taxon>Arabidopsis</taxon>
    </lineage>
</organism>
<name>TRM9_ARATH</name>
<gene>
    <name evidence="2" type="primary">TRM9</name>
    <name evidence="5" type="ordered locus">At1g36310</name>
    <name evidence="6" type="ORF">F7F23.3</name>
</gene>
<feature type="chain" id="PRO_0000443081" description="tRNA (carboxymethyluridine(34)-5-O)-methyltransferase">
    <location>
        <begin position="1"/>
        <end position="404"/>
    </location>
</feature>
<feature type="modified residue" description="Phosphoserine" evidence="7 8">
    <location>
        <position position="238"/>
    </location>
</feature>
<accession>Q94A09</accession>
<accession>Q8LB98</accession>
<accession>Q9C8X9</accession>
<reference key="1">
    <citation type="journal article" date="2000" name="Nature">
        <title>Sequence and analysis of chromosome 1 of the plant Arabidopsis thaliana.</title>
        <authorList>
            <person name="Theologis A."/>
            <person name="Ecker J.R."/>
            <person name="Palm C.J."/>
            <person name="Federspiel N.A."/>
            <person name="Kaul S."/>
            <person name="White O."/>
            <person name="Alonso J."/>
            <person name="Altafi H."/>
            <person name="Araujo R."/>
            <person name="Bowman C.L."/>
            <person name="Brooks S.Y."/>
            <person name="Buehler E."/>
            <person name="Chan A."/>
            <person name="Chao Q."/>
            <person name="Chen H."/>
            <person name="Cheuk R.F."/>
            <person name="Chin C.W."/>
            <person name="Chung M.K."/>
            <person name="Conn L."/>
            <person name="Conway A.B."/>
            <person name="Conway A.R."/>
            <person name="Creasy T.H."/>
            <person name="Dewar K."/>
            <person name="Dunn P."/>
            <person name="Etgu P."/>
            <person name="Feldblyum T.V."/>
            <person name="Feng J.-D."/>
            <person name="Fong B."/>
            <person name="Fujii C.Y."/>
            <person name="Gill J.E."/>
            <person name="Goldsmith A.D."/>
            <person name="Haas B."/>
            <person name="Hansen N.F."/>
            <person name="Hughes B."/>
            <person name="Huizar L."/>
            <person name="Hunter J.L."/>
            <person name="Jenkins J."/>
            <person name="Johnson-Hopson C."/>
            <person name="Khan S."/>
            <person name="Khaykin E."/>
            <person name="Kim C.J."/>
            <person name="Koo H.L."/>
            <person name="Kremenetskaia I."/>
            <person name="Kurtz D.B."/>
            <person name="Kwan A."/>
            <person name="Lam B."/>
            <person name="Langin-Hooper S."/>
            <person name="Lee A."/>
            <person name="Lee J.M."/>
            <person name="Lenz C.A."/>
            <person name="Li J.H."/>
            <person name="Li Y.-P."/>
            <person name="Lin X."/>
            <person name="Liu S.X."/>
            <person name="Liu Z.A."/>
            <person name="Luros J.S."/>
            <person name="Maiti R."/>
            <person name="Marziali A."/>
            <person name="Militscher J."/>
            <person name="Miranda M."/>
            <person name="Nguyen M."/>
            <person name="Nierman W.C."/>
            <person name="Osborne B.I."/>
            <person name="Pai G."/>
            <person name="Peterson J."/>
            <person name="Pham P.K."/>
            <person name="Rizzo M."/>
            <person name="Rooney T."/>
            <person name="Rowley D."/>
            <person name="Sakano H."/>
            <person name="Salzberg S.L."/>
            <person name="Schwartz J.R."/>
            <person name="Shinn P."/>
            <person name="Southwick A.M."/>
            <person name="Sun H."/>
            <person name="Tallon L.J."/>
            <person name="Tambunga G."/>
            <person name="Toriumi M.J."/>
            <person name="Town C.D."/>
            <person name="Utterback T."/>
            <person name="Van Aken S."/>
            <person name="Vaysberg M."/>
            <person name="Vysotskaia V.S."/>
            <person name="Walker M."/>
            <person name="Wu D."/>
            <person name="Yu G."/>
            <person name="Fraser C.M."/>
            <person name="Venter J.C."/>
            <person name="Davis R.W."/>
        </authorList>
    </citation>
    <scope>NUCLEOTIDE SEQUENCE [LARGE SCALE GENOMIC DNA]</scope>
    <source>
        <strain>cv. Columbia</strain>
    </source>
</reference>
<reference key="2">
    <citation type="journal article" date="2017" name="Plant J.">
        <title>Araport11: a complete reannotation of the Arabidopsis thaliana reference genome.</title>
        <authorList>
            <person name="Cheng C.Y."/>
            <person name="Krishnakumar V."/>
            <person name="Chan A.P."/>
            <person name="Thibaud-Nissen F."/>
            <person name="Schobel S."/>
            <person name="Town C.D."/>
        </authorList>
    </citation>
    <scope>GENOME REANNOTATION</scope>
    <source>
        <strain>cv. Columbia</strain>
    </source>
</reference>
<reference key="3">
    <citation type="journal article" date="2003" name="Science">
        <title>Empirical analysis of transcriptional activity in the Arabidopsis genome.</title>
        <authorList>
            <person name="Yamada K."/>
            <person name="Lim J."/>
            <person name="Dale J.M."/>
            <person name="Chen H."/>
            <person name="Shinn P."/>
            <person name="Palm C.J."/>
            <person name="Southwick A.M."/>
            <person name="Wu H.C."/>
            <person name="Kim C.J."/>
            <person name="Nguyen M."/>
            <person name="Pham P.K."/>
            <person name="Cheuk R.F."/>
            <person name="Karlin-Newmann G."/>
            <person name="Liu S.X."/>
            <person name="Lam B."/>
            <person name="Sakano H."/>
            <person name="Wu T."/>
            <person name="Yu G."/>
            <person name="Miranda M."/>
            <person name="Quach H.L."/>
            <person name="Tripp M."/>
            <person name="Chang C.H."/>
            <person name="Lee J.M."/>
            <person name="Toriumi M.J."/>
            <person name="Chan M.M."/>
            <person name="Tang C.C."/>
            <person name="Onodera C.S."/>
            <person name="Deng J.M."/>
            <person name="Akiyama K."/>
            <person name="Ansari Y."/>
            <person name="Arakawa T."/>
            <person name="Banh J."/>
            <person name="Banno F."/>
            <person name="Bowser L."/>
            <person name="Brooks S.Y."/>
            <person name="Carninci P."/>
            <person name="Chao Q."/>
            <person name="Choy N."/>
            <person name="Enju A."/>
            <person name="Goldsmith A.D."/>
            <person name="Gurjal M."/>
            <person name="Hansen N.F."/>
            <person name="Hayashizaki Y."/>
            <person name="Johnson-Hopson C."/>
            <person name="Hsuan V.W."/>
            <person name="Iida K."/>
            <person name="Karnes M."/>
            <person name="Khan S."/>
            <person name="Koesema E."/>
            <person name="Ishida J."/>
            <person name="Jiang P.X."/>
            <person name="Jones T."/>
            <person name="Kawai J."/>
            <person name="Kamiya A."/>
            <person name="Meyers C."/>
            <person name="Nakajima M."/>
            <person name="Narusaka M."/>
            <person name="Seki M."/>
            <person name="Sakurai T."/>
            <person name="Satou M."/>
            <person name="Tamse R."/>
            <person name="Vaysberg M."/>
            <person name="Wallender E.K."/>
            <person name="Wong C."/>
            <person name="Yamamura Y."/>
            <person name="Yuan S."/>
            <person name="Shinozaki K."/>
            <person name="Davis R.W."/>
            <person name="Theologis A."/>
            <person name="Ecker J.R."/>
        </authorList>
    </citation>
    <scope>NUCLEOTIDE SEQUENCE [LARGE SCALE MRNA]</scope>
    <source>
        <strain>cv. Columbia</strain>
    </source>
</reference>
<reference key="4">
    <citation type="journal article" date="2009" name="DNA Res.">
        <title>Analysis of multiple occurrences of alternative splicing events in Arabidopsis thaliana using novel sequenced full-length cDNAs.</title>
        <authorList>
            <person name="Iida K."/>
            <person name="Fukami-Kobayashi K."/>
            <person name="Toyoda A."/>
            <person name="Sakaki Y."/>
            <person name="Kobayashi M."/>
            <person name="Seki M."/>
            <person name="Shinozaki K."/>
        </authorList>
    </citation>
    <scope>NUCLEOTIDE SEQUENCE [LARGE SCALE MRNA]</scope>
    <source>
        <strain>cv. Columbia</strain>
    </source>
</reference>
<reference key="5">
    <citation type="submission" date="2002-03" db="EMBL/GenBank/DDBJ databases">
        <title>Full-length cDNA from Arabidopsis thaliana.</title>
        <authorList>
            <person name="Brover V.V."/>
            <person name="Troukhan M.E."/>
            <person name="Alexandrov N.A."/>
            <person name="Lu Y.-P."/>
            <person name="Flavell R.B."/>
            <person name="Feldmann K.A."/>
        </authorList>
    </citation>
    <scope>NUCLEOTIDE SEQUENCE [LARGE SCALE MRNA]</scope>
</reference>
<reference key="6">
    <citation type="journal article" date="2009" name="J. Proteomics">
        <title>Phosphoproteomic analysis of nuclei-enriched fractions from Arabidopsis thaliana.</title>
        <authorList>
            <person name="Jones A.M.E."/>
            <person name="MacLean D."/>
            <person name="Studholme D.J."/>
            <person name="Serna-Sanz A."/>
            <person name="Andreasson E."/>
            <person name="Rathjen J.P."/>
            <person name="Peck S.C."/>
        </authorList>
    </citation>
    <scope>PHOSPHORYLATION [LARGE SCALE ANALYSIS] AT SER-238</scope>
    <scope>IDENTIFICATION BY MASS SPECTROMETRY [LARGE SCALE ANALYSIS]</scope>
    <source>
        <strain>cv. Columbia</strain>
    </source>
</reference>
<reference key="7">
    <citation type="journal article" date="2009" name="Plant Physiol.">
        <title>Large-scale Arabidopsis phosphoproteome profiling reveals novel chloroplast kinase substrates and phosphorylation networks.</title>
        <authorList>
            <person name="Reiland S."/>
            <person name="Messerli G."/>
            <person name="Baerenfaller K."/>
            <person name="Gerrits B."/>
            <person name="Endler A."/>
            <person name="Grossmann J."/>
            <person name="Gruissem W."/>
            <person name="Baginsky S."/>
        </authorList>
    </citation>
    <scope>PHOSPHORYLATION [LARGE SCALE ANALYSIS] AT SER-238</scope>
    <scope>IDENTIFICATION BY MASS SPECTROMETRY [LARGE SCALE ANALYSIS]</scope>
</reference>
<reference key="8">
    <citation type="journal article" date="2011" name="Nucleic Acids Res.">
        <title>Roles of Trm9- and ALKBH8-like proteins in the formation of modified wobble uridines in Arabidopsis tRNA.</title>
        <authorList>
            <person name="Leihne V."/>
            <person name="Kirpekar F."/>
            <person name="Vaagboe C.B."/>
            <person name="van den Born E."/>
            <person name="Krokan H.E."/>
            <person name="Grini P.E."/>
            <person name="Meza T.J."/>
            <person name="Falnes P.O."/>
        </authorList>
    </citation>
    <scope>FUNCTION</scope>
    <scope>CATALYTIC ACTIVITY</scope>
    <scope>INTERACTION WITH TRM112A AND TRM112B</scope>
</reference>
<protein>
    <recommendedName>
        <fullName evidence="3">tRNA (carboxymethyluridine(34)-5-O)-methyltransferase</fullName>
        <ecNumber evidence="4">2.1.1.229</ecNumber>
    </recommendedName>
    <alternativeName>
        <fullName evidence="3">tRNA methyltransferase 9 homolog</fullName>
        <shortName evidence="2">AtTRM9</shortName>
    </alternativeName>
</protein>
<proteinExistence type="evidence at protein level"/>
<sequence length="404" mass="44960">MILDVLRTFSTRTRNLPSSGFYSISTSIMRDIKVKSDSKEFLTSSDEEEESVSIRVSSSSSLSSVKSTPEIEKKYVHRVYDAIAPHFSSTRFAKWPKVAAFLESLPSGSVILDAGCGNGKYLGLNPSCFFIGCDISHPLIKICSDKGQEVLVADAVNLPYREEFGDAAISIAVLHHLSTENRRKKAIEELVRVVKPGGFVLITVWAAEQEDTSLLTKWTPLSAKYVEEWVGPGSPMNSPRVRNNPFFSLESIPETEVSTKEQKVENSQFIGLESIPESEESTREQKGESIIPETKASIVEQKDEKSVEESLEALKKSQQEYFVPWHLPYHRAEVSGASASALASGLAKKDDRKGAVVYNRYYHVFSEGELERLASGVGNAMIVDRFFDKSNWCIVLQKEALNQD</sequence>
<keyword id="KW-0489">Methyltransferase</keyword>
<keyword id="KW-0597">Phosphoprotein</keyword>
<keyword id="KW-1185">Reference proteome</keyword>
<keyword id="KW-0949">S-adenosyl-L-methionine</keyword>
<keyword id="KW-0808">Transferase</keyword>
<dbReference type="EC" id="2.1.1.229" evidence="4"/>
<dbReference type="EMBL" id="AC021199">
    <property type="protein sequence ID" value="AAG52197.1"/>
    <property type="status" value="ALT_SEQ"/>
    <property type="molecule type" value="Genomic_DNA"/>
</dbReference>
<dbReference type="EMBL" id="CP002684">
    <property type="protein sequence ID" value="AEE31858.1"/>
    <property type="molecule type" value="Genomic_DNA"/>
</dbReference>
<dbReference type="EMBL" id="CP002684">
    <property type="protein sequence ID" value="AEE31859.1"/>
    <property type="molecule type" value="Genomic_DNA"/>
</dbReference>
<dbReference type="EMBL" id="AY050771">
    <property type="protein sequence ID" value="AAK92706.1"/>
    <property type="molecule type" value="mRNA"/>
</dbReference>
<dbReference type="EMBL" id="AY091371">
    <property type="protein sequence ID" value="AAM14310.1"/>
    <property type="molecule type" value="mRNA"/>
</dbReference>
<dbReference type="EMBL" id="AK317228">
    <property type="protein sequence ID" value="BAH19909.1"/>
    <property type="molecule type" value="mRNA"/>
</dbReference>
<dbReference type="EMBL" id="AY087343">
    <property type="protein sequence ID" value="AAM64893.1"/>
    <property type="status" value="ALT_INIT"/>
    <property type="molecule type" value="mRNA"/>
</dbReference>
<dbReference type="PIR" id="C86484">
    <property type="entry name" value="C86484"/>
</dbReference>
<dbReference type="RefSeq" id="NP_001031144.1">
    <property type="nucleotide sequence ID" value="NM_001036067.2"/>
</dbReference>
<dbReference type="RefSeq" id="NP_564470.1">
    <property type="nucleotide sequence ID" value="NM_103320.3"/>
</dbReference>
<dbReference type="SMR" id="Q94A09"/>
<dbReference type="FunCoup" id="Q94A09">
    <property type="interactions" value="1902"/>
</dbReference>
<dbReference type="STRING" id="3702.Q94A09"/>
<dbReference type="iPTMnet" id="Q94A09"/>
<dbReference type="PaxDb" id="3702-AT1G36310.1"/>
<dbReference type="ProteomicsDB" id="228720"/>
<dbReference type="EnsemblPlants" id="AT1G36310.1">
    <property type="protein sequence ID" value="AT1G36310.1"/>
    <property type="gene ID" value="AT1G36310"/>
</dbReference>
<dbReference type="EnsemblPlants" id="AT1G36310.2">
    <property type="protein sequence ID" value="AT1G36310.2"/>
    <property type="gene ID" value="AT1G36310"/>
</dbReference>
<dbReference type="GeneID" id="840538"/>
<dbReference type="Gramene" id="AT1G36310.1">
    <property type="protein sequence ID" value="AT1G36310.1"/>
    <property type="gene ID" value="AT1G36310"/>
</dbReference>
<dbReference type="Gramene" id="AT1G36310.2">
    <property type="protein sequence ID" value="AT1G36310.2"/>
    <property type="gene ID" value="AT1G36310"/>
</dbReference>
<dbReference type="KEGG" id="ath:AT1G36310"/>
<dbReference type="Araport" id="AT1G36310"/>
<dbReference type="TAIR" id="AT1G36310">
    <property type="gene designation" value="TRM9"/>
</dbReference>
<dbReference type="eggNOG" id="KOG1331">
    <property type="taxonomic scope" value="Eukaryota"/>
</dbReference>
<dbReference type="HOGENOM" id="CLU_029501_1_0_1"/>
<dbReference type="InParanoid" id="Q94A09"/>
<dbReference type="OMA" id="SCYFIGC"/>
<dbReference type="PhylomeDB" id="Q94A09"/>
<dbReference type="PRO" id="PR:Q94A09"/>
<dbReference type="Proteomes" id="UP000006548">
    <property type="component" value="Chromosome 1"/>
</dbReference>
<dbReference type="ExpressionAtlas" id="Q94A09">
    <property type="expression patterns" value="baseline and differential"/>
</dbReference>
<dbReference type="GO" id="GO:0005634">
    <property type="term" value="C:nucleus"/>
    <property type="evidence" value="ECO:0007005"/>
    <property type="project" value="TAIR"/>
</dbReference>
<dbReference type="GO" id="GO:0008757">
    <property type="term" value="F:S-adenosylmethionine-dependent methyltransferase activity"/>
    <property type="evidence" value="ECO:0007669"/>
    <property type="project" value="InterPro"/>
</dbReference>
<dbReference type="GO" id="GO:0106335">
    <property type="term" value="F:tRNA (5-carboxymethyluridine(34)-5-O)-methyltransferase activity"/>
    <property type="evidence" value="ECO:0007669"/>
    <property type="project" value="UniProtKB-EC"/>
</dbReference>
<dbReference type="GO" id="GO:0008175">
    <property type="term" value="F:tRNA methyltransferase activity"/>
    <property type="evidence" value="ECO:0000314"/>
    <property type="project" value="TAIR"/>
</dbReference>
<dbReference type="GO" id="GO:0032259">
    <property type="term" value="P:methylation"/>
    <property type="evidence" value="ECO:0007669"/>
    <property type="project" value="UniProtKB-KW"/>
</dbReference>
<dbReference type="GO" id="GO:0002098">
    <property type="term" value="P:tRNA wobble uridine modification"/>
    <property type="evidence" value="ECO:0000315"/>
    <property type="project" value="TAIR"/>
</dbReference>
<dbReference type="CDD" id="cd02440">
    <property type="entry name" value="AdoMet_MTases"/>
    <property type="match status" value="1"/>
</dbReference>
<dbReference type="Gene3D" id="3.40.50.150">
    <property type="entry name" value="Vaccinia Virus protein VP39"/>
    <property type="match status" value="1"/>
</dbReference>
<dbReference type="InterPro" id="IPR051422">
    <property type="entry name" value="AlkB_tRNA_MeTrf/Diox"/>
</dbReference>
<dbReference type="InterPro" id="IPR013216">
    <property type="entry name" value="Methyltransf_11"/>
</dbReference>
<dbReference type="InterPro" id="IPR029063">
    <property type="entry name" value="SAM-dependent_MTases_sf"/>
</dbReference>
<dbReference type="PANTHER" id="PTHR13069">
    <property type="entry name" value="ALKYLATED DNA REPAIR PROTEIN ALKB HOMOLOG 8"/>
    <property type="match status" value="1"/>
</dbReference>
<dbReference type="PANTHER" id="PTHR13069:SF21">
    <property type="entry name" value="ALKYLATED DNA REPAIR PROTEIN ALKB HOMOLOG 8"/>
    <property type="match status" value="1"/>
</dbReference>
<dbReference type="Pfam" id="PF08241">
    <property type="entry name" value="Methyltransf_11"/>
    <property type="match status" value="1"/>
</dbReference>
<dbReference type="SUPFAM" id="SSF53335">
    <property type="entry name" value="S-adenosyl-L-methionine-dependent methyltransferases"/>
    <property type="match status" value="1"/>
</dbReference>
<evidence type="ECO:0000269" key="1">
    <source>
    </source>
</evidence>
<evidence type="ECO:0000303" key="2">
    <source>
    </source>
</evidence>
<evidence type="ECO:0000305" key="3"/>
<evidence type="ECO:0000305" key="4">
    <source>
    </source>
</evidence>
<evidence type="ECO:0000312" key="5">
    <source>
        <dbReference type="Araport" id="AT1G36310"/>
    </source>
</evidence>
<evidence type="ECO:0000312" key="6">
    <source>
        <dbReference type="EMBL" id="AAG52197.1"/>
    </source>
</evidence>
<evidence type="ECO:0007744" key="7">
    <source>
    </source>
</evidence>
<evidence type="ECO:0007744" key="8">
    <source>
    </source>
</evidence>